<protein>
    <recommendedName>
        <fullName evidence="1">tRNA pseudouridine synthase A</fullName>
        <ecNumber evidence="1">5.4.99.12</ecNumber>
    </recommendedName>
    <alternativeName>
        <fullName evidence="1">tRNA pseudouridine(38-40) synthase</fullName>
    </alternativeName>
    <alternativeName>
        <fullName evidence="1">tRNA pseudouridylate synthase I</fullName>
    </alternativeName>
    <alternativeName>
        <fullName evidence="1">tRNA-uridine isomerase I</fullName>
    </alternativeName>
</protein>
<feature type="chain" id="PRO_1000194528" description="tRNA pseudouridine synthase A">
    <location>
        <begin position="1"/>
        <end position="246"/>
    </location>
</feature>
<feature type="active site" description="Nucleophile" evidence="1">
    <location>
        <position position="53"/>
    </location>
</feature>
<feature type="binding site" evidence="1">
    <location>
        <position position="111"/>
    </location>
    <ligand>
        <name>substrate</name>
    </ligand>
</feature>
<gene>
    <name evidence="1" type="primary">truA</name>
    <name type="ordered locus">Aflv_0137</name>
</gene>
<proteinExistence type="inferred from homology"/>
<comment type="function">
    <text evidence="1">Formation of pseudouridine at positions 38, 39 and 40 in the anticodon stem and loop of transfer RNAs.</text>
</comment>
<comment type="catalytic activity">
    <reaction evidence="1">
        <text>uridine(38/39/40) in tRNA = pseudouridine(38/39/40) in tRNA</text>
        <dbReference type="Rhea" id="RHEA:22376"/>
        <dbReference type="Rhea" id="RHEA-COMP:10085"/>
        <dbReference type="Rhea" id="RHEA-COMP:10087"/>
        <dbReference type="ChEBI" id="CHEBI:65314"/>
        <dbReference type="ChEBI" id="CHEBI:65315"/>
        <dbReference type="EC" id="5.4.99.12"/>
    </reaction>
</comment>
<comment type="subunit">
    <text evidence="1">Homodimer.</text>
</comment>
<comment type="similarity">
    <text evidence="1">Belongs to the tRNA pseudouridine synthase TruA family.</text>
</comment>
<name>TRUA_ANOFW</name>
<keyword id="KW-0413">Isomerase</keyword>
<keyword id="KW-0819">tRNA processing</keyword>
<evidence type="ECO:0000255" key="1">
    <source>
        <dbReference type="HAMAP-Rule" id="MF_00171"/>
    </source>
</evidence>
<sequence length="246" mass="28226">MRRIKCTIAYDGTNFAGYQIQQQKRTVQGELERALSIIHKGQFVRVYASGRTDATVHAYGQVIHFDTPLTIPDERWPKALNALLPDDVIVKEASEVPSSFHARFSVKKKEYRYRVWIGEKNVFLRHYVYHHPYDVSVPAMNEALRYLIGTHDFTSFCSAKTEVDDKVRTIYEAEVVQEGEELIFRLVGNGFLYNMVRIIVGTVLEVGRGERCAEEIKTILEQKNRSVAGKTAPGHGLYLWHVSYDN</sequence>
<dbReference type="EC" id="5.4.99.12" evidence="1"/>
<dbReference type="EMBL" id="CP000922">
    <property type="protein sequence ID" value="ACJ32521.1"/>
    <property type="molecule type" value="Genomic_DNA"/>
</dbReference>
<dbReference type="RefSeq" id="WP_012573868.1">
    <property type="nucleotide sequence ID" value="NC_011567.1"/>
</dbReference>
<dbReference type="SMR" id="B7GJ99"/>
<dbReference type="STRING" id="491915.Aflv_0137"/>
<dbReference type="GeneID" id="7036336"/>
<dbReference type="KEGG" id="afl:Aflv_0137"/>
<dbReference type="PATRIC" id="fig|491915.6.peg.137"/>
<dbReference type="eggNOG" id="COG0101">
    <property type="taxonomic scope" value="Bacteria"/>
</dbReference>
<dbReference type="HOGENOM" id="CLU_014673_0_1_9"/>
<dbReference type="Proteomes" id="UP000000742">
    <property type="component" value="Chromosome"/>
</dbReference>
<dbReference type="GO" id="GO:0003723">
    <property type="term" value="F:RNA binding"/>
    <property type="evidence" value="ECO:0007669"/>
    <property type="project" value="InterPro"/>
</dbReference>
<dbReference type="GO" id="GO:0160147">
    <property type="term" value="F:tRNA pseudouridine(38-40) synthase activity"/>
    <property type="evidence" value="ECO:0007669"/>
    <property type="project" value="UniProtKB-EC"/>
</dbReference>
<dbReference type="GO" id="GO:0031119">
    <property type="term" value="P:tRNA pseudouridine synthesis"/>
    <property type="evidence" value="ECO:0007669"/>
    <property type="project" value="UniProtKB-UniRule"/>
</dbReference>
<dbReference type="CDD" id="cd02570">
    <property type="entry name" value="PseudoU_synth_EcTruA"/>
    <property type="match status" value="1"/>
</dbReference>
<dbReference type="FunFam" id="3.30.70.580:FF:000001">
    <property type="entry name" value="tRNA pseudouridine synthase A"/>
    <property type="match status" value="1"/>
</dbReference>
<dbReference type="Gene3D" id="3.30.70.660">
    <property type="entry name" value="Pseudouridine synthase I, catalytic domain, C-terminal subdomain"/>
    <property type="match status" value="1"/>
</dbReference>
<dbReference type="Gene3D" id="3.30.70.580">
    <property type="entry name" value="Pseudouridine synthase I, catalytic domain, N-terminal subdomain"/>
    <property type="match status" value="1"/>
</dbReference>
<dbReference type="HAMAP" id="MF_00171">
    <property type="entry name" value="TruA"/>
    <property type="match status" value="1"/>
</dbReference>
<dbReference type="InterPro" id="IPR020103">
    <property type="entry name" value="PsdUridine_synth_cat_dom_sf"/>
</dbReference>
<dbReference type="InterPro" id="IPR001406">
    <property type="entry name" value="PsdUridine_synth_TruA"/>
</dbReference>
<dbReference type="InterPro" id="IPR020097">
    <property type="entry name" value="PsdUridine_synth_TruA_a/b_dom"/>
</dbReference>
<dbReference type="InterPro" id="IPR020095">
    <property type="entry name" value="PsdUridine_synth_TruA_C"/>
</dbReference>
<dbReference type="InterPro" id="IPR020094">
    <property type="entry name" value="TruA/RsuA/RluB/E/F_N"/>
</dbReference>
<dbReference type="NCBIfam" id="TIGR00071">
    <property type="entry name" value="hisT_truA"/>
    <property type="match status" value="1"/>
</dbReference>
<dbReference type="PANTHER" id="PTHR11142">
    <property type="entry name" value="PSEUDOURIDYLATE SYNTHASE"/>
    <property type="match status" value="1"/>
</dbReference>
<dbReference type="PANTHER" id="PTHR11142:SF0">
    <property type="entry name" value="TRNA PSEUDOURIDINE SYNTHASE-LIKE 1"/>
    <property type="match status" value="1"/>
</dbReference>
<dbReference type="Pfam" id="PF01416">
    <property type="entry name" value="PseudoU_synth_1"/>
    <property type="match status" value="2"/>
</dbReference>
<dbReference type="PIRSF" id="PIRSF001430">
    <property type="entry name" value="tRNA_psdUrid_synth"/>
    <property type="match status" value="1"/>
</dbReference>
<dbReference type="SUPFAM" id="SSF55120">
    <property type="entry name" value="Pseudouridine synthase"/>
    <property type="match status" value="1"/>
</dbReference>
<accession>B7GJ99</accession>
<organism>
    <name type="scientific">Anoxybacillus flavithermus (strain DSM 21510 / WK1)</name>
    <dbReference type="NCBI Taxonomy" id="491915"/>
    <lineage>
        <taxon>Bacteria</taxon>
        <taxon>Bacillati</taxon>
        <taxon>Bacillota</taxon>
        <taxon>Bacilli</taxon>
        <taxon>Bacillales</taxon>
        <taxon>Anoxybacillaceae</taxon>
        <taxon>Anoxybacillus</taxon>
    </lineage>
</organism>
<reference key="1">
    <citation type="journal article" date="2008" name="Genome Biol.">
        <title>Encapsulated in silica: genome, proteome and physiology of the thermophilic bacterium Anoxybacillus flavithermus WK1.</title>
        <authorList>
            <person name="Saw J.H."/>
            <person name="Mountain B.W."/>
            <person name="Feng L."/>
            <person name="Omelchenko M.V."/>
            <person name="Hou S."/>
            <person name="Saito J.A."/>
            <person name="Stott M.B."/>
            <person name="Li D."/>
            <person name="Zhao G."/>
            <person name="Wu J."/>
            <person name="Galperin M.Y."/>
            <person name="Koonin E.V."/>
            <person name="Makarova K.S."/>
            <person name="Wolf Y.I."/>
            <person name="Rigden D.J."/>
            <person name="Dunfield P.F."/>
            <person name="Wang L."/>
            <person name="Alam M."/>
        </authorList>
    </citation>
    <scope>NUCLEOTIDE SEQUENCE [LARGE SCALE GENOMIC DNA]</scope>
    <source>
        <strain>DSM 21510 / WK1</strain>
    </source>
</reference>